<gene>
    <name evidence="1" type="primary">ndhC</name>
</gene>
<keyword id="KW-0150">Chloroplast</keyword>
<keyword id="KW-0472">Membrane</keyword>
<keyword id="KW-0520">NAD</keyword>
<keyword id="KW-0521">NADP</keyword>
<keyword id="KW-0934">Plastid</keyword>
<keyword id="KW-0618">Plastoquinone</keyword>
<keyword id="KW-0874">Quinone</keyword>
<keyword id="KW-0691">RNA editing</keyword>
<keyword id="KW-0793">Thylakoid</keyword>
<keyword id="KW-1278">Translocase</keyword>
<keyword id="KW-0812">Transmembrane</keyword>
<keyword id="KW-1133">Transmembrane helix</keyword>
<keyword id="KW-0813">Transport</keyword>
<name>NU3C_ANTAG</name>
<accession>Q31792</accession>
<dbReference type="EC" id="7.1.1.-" evidence="1"/>
<dbReference type="EMBL" id="D43695">
    <property type="protein sequence ID" value="BAA07793.1"/>
    <property type="status" value="ALT_SEQ"/>
    <property type="molecule type" value="Genomic_DNA"/>
</dbReference>
<dbReference type="EMBL" id="AB086179">
    <property type="protein sequence ID" value="BAC55354.1"/>
    <property type="molecule type" value="Genomic_DNA"/>
</dbReference>
<dbReference type="EMBL" id="AB087446">
    <property type="protein sequence ID" value="BAC55449.1"/>
    <property type="molecule type" value="mRNA"/>
</dbReference>
<dbReference type="PIR" id="S71144">
    <property type="entry name" value="S71144"/>
</dbReference>
<dbReference type="RefSeq" id="NP_777418.1">
    <property type="nucleotide sequence ID" value="NC_004543.1"/>
</dbReference>
<dbReference type="SMR" id="Q31792"/>
<dbReference type="GeneID" id="2553496"/>
<dbReference type="GO" id="GO:0009535">
    <property type="term" value="C:chloroplast thylakoid membrane"/>
    <property type="evidence" value="ECO:0007669"/>
    <property type="project" value="UniProtKB-SubCell"/>
</dbReference>
<dbReference type="GO" id="GO:0030964">
    <property type="term" value="C:NADH dehydrogenase complex"/>
    <property type="evidence" value="ECO:0007669"/>
    <property type="project" value="TreeGrafter"/>
</dbReference>
<dbReference type="GO" id="GO:0008137">
    <property type="term" value="F:NADH dehydrogenase (ubiquinone) activity"/>
    <property type="evidence" value="ECO:0007669"/>
    <property type="project" value="InterPro"/>
</dbReference>
<dbReference type="GO" id="GO:0048038">
    <property type="term" value="F:quinone binding"/>
    <property type="evidence" value="ECO:0007669"/>
    <property type="project" value="UniProtKB-KW"/>
</dbReference>
<dbReference type="GO" id="GO:0019684">
    <property type="term" value="P:photosynthesis, light reaction"/>
    <property type="evidence" value="ECO:0007669"/>
    <property type="project" value="UniProtKB-UniRule"/>
</dbReference>
<dbReference type="FunFam" id="1.20.58.1610:FF:000001">
    <property type="entry name" value="NAD(P)H-quinone oxidoreductase subunit 3, chloroplastic"/>
    <property type="match status" value="1"/>
</dbReference>
<dbReference type="Gene3D" id="1.20.58.1610">
    <property type="entry name" value="NADH:ubiquinone/plastoquinone oxidoreductase, chain 3"/>
    <property type="match status" value="1"/>
</dbReference>
<dbReference type="HAMAP" id="MF_01394">
    <property type="entry name" value="NDH1_NuoA"/>
    <property type="match status" value="1"/>
</dbReference>
<dbReference type="InterPro" id="IPR023043">
    <property type="entry name" value="NAD(P)H_OxRDtase_bac/plastid"/>
</dbReference>
<dbReference type="InterPro" id="IPR000440">
    <property type="entry name" value="NADH_UbQ/plastoQ_OxRdtase_su3"/>
</dbReference>
<dbReference type="InterPro" id="IPR038430">
    <property type="entry name" value="NDAH_ubi_oxred_su3_sf"/>
</dbReference>
<dbReference type="PANTHER" id="PTHR11058">
    <property type="entry name" value="NADH-UBIQUINONE OXIDOREDUCTASE CHAIN 3"/>
    <property type="match status" value="1"/>
</dbReference>
<dbReference type="PANTHER" id="PTHR11058:SF9">
    <property type="entry name" value="NADH-UBIQUINONE OXIDOREDUCTASE CHAIN 3"/>
    <property type="match status" value="1"/>
</dbReference>
<dbReference type="Pfam" id="PF00507">
    <property type="entry name" value="Oxidored_q4"/>
    <property type="match status" value="1"/>
</dbReference>
<protein>
    <recommendedName>
        <fullName evidence="1">NAD(P)H-quinone oxidoreductase subunit 3, chloroplastic</fullName>
        <ecNumber evidence="1">7.1.1.-</ecNumber>
    </recommendedName>
    <alternativeName>
        <fullName evidence="1">NAD(P)H dehydrogenase subunit 3</fullName>
    </alternativeName>
    <alternativeName>
        <fullName evidence="1">NADH-plastoquinone oxidoreductase subunit 3</fullName>
    </alternativeName>
</protein>
<proteinExistence type="evidence at transcript level"/>
<reference key="1">
    <citation type="journal article" date="1996" name="Nucleic Acids Res.">
        <title>Extensive RNA editing of U to C in addition to C to U substitution in the rbcL transcripts of hornwort chloroplasts and the origin of RNA editing in green plants.</title>
        <authorList>
            <person name="Yoshinaga K."/>
            <person name="Iinuma H."/>
            <person name="Masuzawa T."/>
            <person name="Ueda K."/>
        </authorList>
    </citation>
    <scope>NUCLEOTIDE SEQUENCE [MRNA]</scope>
    <source>
        <tissue>Thallus</tissue>
    </source>
</reference>
<reference key="2">
    <citation type="journal article" date="2003" name="Nucleic Acids Res.">
        <title>The complete nucleotide sequence of the hornwort (Anthoceros formosae) chloroplast genome: insight into the earliest land plants.</title>
        <authorList>
            <person name="Kugita M."/>
            <person name="Kaneko A."/>
            <person name="Yamamoto Y."/>
            <person name="Takeya Y."/>
            <person name="Matsumoto T."/>
            <person name="Yoshinaga K."/>
        </authorList>
    </citation>
    <scope>NUCLEOTIDE SEQUENCE [LARGE SCALE GENOMIC DNA]</scope>
    <scope>RNA EDITING</scope>
</reference>
<reference key="3">
    <citation type="journal article" date="2003" name="Nucleic Acids Res.">
        <title>RNA editing in hornwort chloroplasts makes more than half the genes functional.</title>
        <authorList>
            <person name="Kugita M."/>
            <person name="Yamamoto Y."/>
            <person name="Fujikawa T."/>
            <person name="Matsumoto T."/>
            <person name="Yoshinaga K."/>
        </authorList>
    </citation>
    <scope>NUCLEOTIDE SEQUENCE [MRNA]</scope>
    <scope>RNA EDITING</scope>
    <source>
        <tissue>Thallus</tissue>
    </source>
</reference>
<evidence type="ECO:0000255" key="1">
    <source>
        <dbReference type="HAMAP-Rule" id="MF_01394"/>
    </source>
</evidence>
<evidence type="ECO:0000269" key="2">
    <source>
    </source>
</evidence>
<evidence type="ECO:0000269" key="3">
    <source>
    </source>
</evidence>
<geneLocation type="chloroplast"/>
<sequence length="120" mass="14066">MFLVSKYNYFWIFLLIASLIPTIAFSISRVIAPISKGPEKFTSYECGIEPMGDAWIQFQIRYYMFALVFVIFDVETVFLYPWAMSFKQLGIPAFIEVFIFVFILIIGLIYAWRKGALEWS</sequence>
<feature type="chain" id="PRO_0000117843" description="NAD(P)H-quinone oxidoreductase subunit 3, chloroplastic">
    <location>
        <begin position="1"/>
        <end position="120"/>
    </location>
</feature>
<feature type="transmembrane region" description="Helical" evidence="1">
    <location>
        <begin position="7"/>
        <end position="27"/>
    </location>
</feature>
<feature type="transmembrane region" description="Helical" evidence="1">
    <location>
        <begin position="64"/>
        <end position="84"/>
    </location>
</feature>
<feature type="transmembrane region" description="Helical" evidence="1">
    <location>
        <begin position="89"/>
        <end position="109"/>
    </location>
</feature>
<comment type="function">
    <text evidence="1">NDH shuttles electrons from NAD(P)H:plastoquinone, via FMN and iron-sulfur (Fe-S) centers, to quinones in the photosynthetic chain and possibly in a chloroplast respiratory chain. The immediate electron acceptor for the enzyme in this species is believed to be plastoquinone. Couples the redox reaction to proton translocation, and thus conserves the redox energy in a proton gradient.</text>
</comment>
<comment type="catalytic activity">
    <reaction evidence="1">
        <text>a plastoquinone + NADH + (n+1) H(+)(in) = a plastoquinol + NAD(+) + n H(+)(out)</text>
        <dbReference type="Rhea" id="RHEA:42608"/>
        <dbReference type="Rhea" id="RHEA-COMP:9561"/>
        <dbReference type="Rhea" id="RHEA-COMP:9562"/>
        <dbReference type="ChEBI" id="CHEBI:15378"/>
        <dbReference type="ChEBI" id="CHEBI:17757"/>
        <dbReference type="ChEBI" id="CHEBI:57540"/>
        <dbReference type="ChEBI" id="CHEBI:57945"/>
        <dbReference type="ChEBI" id="CHEBI:62192"/>
    </reaction>
</comment>
<comment type="catalytic activity">
    <reaction evidence="1">
        <text>a plastoquinone + NADPH + (n+1) H(+)(in) = a plastoquinol + NADP(+) + n H(+)(out)</text>
        <dbReference type="Rhea" id="RHEA:42612"/>
        <dbReference type="Rhea" id="RHEA-COMP:9561"/>
        <dbReference type="Rhea" id="RHEA-COMP:9562"/>
        <dbReference type="ChEBI" id="CHEBI:15378"/>
        <dbReference type="ChEBI" id="CHEBI:17757"/>
        <dbReference type="ChEBI" id="CHEBI:57783"/>
        <dbReference type="ChEBI" id="CHEBI:58349"/>
        <dbReference type="ChEBI" id="CHEBI:62192"/>
    </reaction>
</comment>
<comment type="subunit">
    <text evidence="1">NDH is composed of at least 16 different subunits, 5 of which are encoded in the nucleus.</text>
</comment>
<comment type="subcellular location">
    <subcellularLocation>
        <location evidence="1">Plastid</location>
        <location evidence="1">Chloroplast thylakoid membrane</location>
        <topology evidence="1">Multi-pass membrane protein</topology>
    </subcellularLocation>
</comment>
<comment type="RNA editing">
    <location>
        <position position="59" evidence="2 3"/>
    </location>
    <location>
        <position position="78" evidence="2 3"/>
    </location>
    <location>
        <position position="94" evidence="2 3"/>
    </location>
    <location>
        <position position="98" evidence="2 3"/>
    </location>
    <location>
        <position position="102" evidence="2 3"/>
    </location>
    <location>
        <position position="121" evidence="2 3"/>
    </location>
    <text>The nonsense codon at position 59 is modified to a sense codon. The stop codon at position 121 is created by RNA editing.</text>
</comment>
<comment type="similarity">
    <text evidence="1">Belongs to the complex I subunit 3 family.</text>
</comment>
<organism>
    <name type="scientific">Anthoceros angustus</name>
    <name type="common">Hornwort</name>
    <name type="synonym">Anthoceros formosae</name>
    <dbReference type="NCBI Taxonomy" id="48387"/>
    <lineage>
        <taxon>Eukaryota</taxon>
        <taxon>Viridiplantae</taxon>
        <taxon>Streptophyta</taxon>
        <taxon>Embryophyta</taxon>
        <taxon>Anthocerotophyta</taxon>
        <taxon>Anthocerotopsida</taxon>
        <taxon>Anthocerotidae</taxon>
        <taxon>Anthocerotales</taxon>
        <taxon>Anthocerotaceae</taxon>
        <taxon>Anthoceros</taxon>
    </lineage>
</organism>